<gene>
    <name evidence="1" type="primary">rplK</name>
    <name evidence="1" type="synonym">rpl11</name>
    <name type="ordered locus">NATL1_02801</name>
</gene>
<keyword id="KW-0488">Methylation</keyword>
<keyword id="KW-0687">Ribonucleoprotein</keyword>
<keyword id="KW-0689">Ribosomal protein</keyword>
<keyword id="KW-0694">RNA-binding</keyword>
<keyword id="KW-0699">rRNA-binding</keyword>
<evidence type="ECO:0000255" key="1">
    <source>
        <dbReference type="HAMAP-Rule" id="MF_00736"/>
    </source>
</evidence>
<evidence type="ECO:0000305" key="2"/>
<reference key="1">
    <citation type="journal article" date="2007" name="PLoS Genet.">
        <title>Patterns and implications of gene gain and loss in the evolution of Prochlorococcus.</title>
        <authorList>
            <person name="Kettler G.C."/>
            <person name="Martiny A.C."/>
            <person name="Huang K."/>
            <person name="Zucker J."/>
            <person name="Coleman M.L."/>
            <person name="Rodrigue S."/>
            <person name="Chen F."/>
            <person name="Lapidus A."/>
            <person name="Ferriera S."/>
            <person name="Johnson J."/>
            <person name="Steglich C."/>
            <person name="Church G.M."/>
            <person name="Richardson P."/>
            <person name="Chisholm S.W."/>
        </authorList>
    </citation>
    <scope>NUCLEOTIDE SEQUENCE [LARGE SCALE GENOMIC DNA]</scope>
    <source>
        <strain>NATL1A</strain>
    </source>
</reference>
<protein>
    <recommendedName>
        <fullName evidence="1">Large ribosomal subunit protein uL11</fullName>
    </recommendedName>
    <alternativeName>
        <fullName evidence="2">50S ribosomal protein L11</fullName>
    </alternativeName>
</protein>
<sequence length="141" mass="14606">MAKKVVALIKLALQAGKANPAPPVGPALGQHGVNIMAFCKEYNSRTQDKAGFVIPVEISVFEDRSFSFITKTPPASVLITKAAGIAKGSGESAKGSAGSISTSQLEEIAKTKLPDLNCSSIESAMKVIEGTAKNMGVSIKD</sequence>
<comment type="function">
    <text evidence="1">Forms part of the ribosomal stalk which helps the ribosome interact with GTP-bound translation factors.</text>
</comment>
<comment type="subunit">
    <text evidence="1">Part of the ribosomal stalk of the 50S ribosomal subunit. Interacts with L10 and the large rRNA to form the base of the stalk. L10 forms an elongated spine to which L12 dimers bind in a sequential fashion forming a multimeric L10(L12)X complex.</text>
</comment>
<comment type="PTM">
    <text evidence="1">One or more lysine residues are methylated.</text>
</comment>
<comment type="similarity">
    <text evidence="1">Belongs to the universal ribosomal protein uL11 family.</text>
</comment>
<organism>
    <name type="scientific">Prochlorococcus marinus (strain NATL1A)</name>
    <dbReference type="NCBI Taxonomy" id="167555"/>
    <lineage>
        <taxon>Bacteria</taxon>
        <taxon>Bacillati</taxon>
        <taxon>Cyanobacteriota</taxon>
        <taxon>Cyanophyceae</taxon>
        <taxon>Synechococcales</taxon>
        <taxon>Prochlorococcaceae</taxon>
        <taxon>Prochlorococcus</taxon>
    </lineage>
</organism>
<proteinExistence type="inferred from homology"/>
<feature type="chain" id="PRO_1000046238" description="Large ribosomal subunit protein uL11">
    <location>
        <begin position="1"/>
        <end position="141"/>
    </location>
</feature>
<dbReference type="EMBL" id="CP000553">
    <property type="protein sequence ID" value="ABM74844.1"/>
    <property type="molecule type" value="Genomic_DNA"/>
</dbReference>
<dbReference type="RefSeq" id="WP_011294204.1">
    <property type="nucleotide sequence ID" value="NC_008819.1"/>
</dbReference>
<dbReference type="SMR" id="A2C034"/>
<dbReference type="KEGG" id="pme:NATL1_02801"/>
<dbReference type="eggNOG" id="COG0080">
    <property type="taxonomic scope" value="Bacteria"/>
</dbReference>
<dbReference type="HOGENOM" id="CLU_074237_2_2_3"/>
<dbReference type="Proteomes" id="UP000002592">
    <property type="component" value="Chromosome"/>
</dbReference>
<dbReference type="GO" id="GO:0022625">
    <property type="term" value="C:cytosolic large ribosomal subunit"/>
    <property type="evidence" value="ECO:0007669"/>
    <property type="project" value="TreeGrafter"/>
</dbReference>
<dbReference type="GO" id="GO:0070180">
    <property type="term" value="F:large ribosomal subunit rRNA binding"/>
    <property type="evidence" value="ECO:0007669"/>
    <property type="project" value="UniProtKB-UniRule"/>
</dbReference>
<dbReference type="GO" id="GO:0003735">
    <property type="term" value="F:structural constituent of ribosome"/>
    <property type="evidence" value="ECO:0007669"/>
    <property type="project" value="InterPro"/>
</dbReference>
<dbReference type="GO" id="GO:0006412">
    <property type="term" value="P:translation"/>
    <property type="evidence" value="ECO:0007669"/>
    <property type="project" value="UniProtKB-UniRule"/>
</dbReference>
<dbReference type="CDD" id="cd00349">
    <property type="entry name" value="Ribosomal_L11"/>
    <property type="match status" value="1"/>
</dbReference>
<dbReference type="FunFam" id="1.10.10.250:FF:000001">
    <property type="entry name" value="50S ribosomal protein L11"/>
    <property type="match status" value="1"/>
</dbReference>
<dbReference type="FunFam" id="3.30.1550.10:FF:000001">
    <property type="entry name" value="50S ribosomal protein L11"/>
    <property type="match status" value="1"/>
</dbReference>
<dbReference type="Gene3D" id="1.10.10.250">
    <property type="entry name" value="Ribosomal protein L11, C-terminal domain"/>
    <property type="match status" value="1"/>
</dbReference>
<dbReference type="Gene3D" id="3.30.1550.10">
    <property type="entry name" value="Ribosomal protein L11/L12, N-terminal domain"/>
    <property type="match status" value="1"/>
</dbReference>
<dbReference type="HAMAP" id="MF_00736">
    <property type="entry name" value="Ribosomal_uL11"/>
    <property type="match status" value="1"/>
</dbReference>
<dbReference type="InterPro" id="IPR000911">
    <property type="entry name" value="Ribosomal_uL11"/>
</dbReference>
<dbReference type="InterPro" id="IPR006519">
    <property type="entry name" value="Ribosomal_uL11_bac-typ"/>
</dbReference>
<dbReference type="InterPro" id="IPR020783">
    <property type="entry name" value="Ribosomal_uL11_C"/>
</dbReference>
<dbReference type="InterPro" id="IPR036769">
    <property type="entry name" value="Ribosomal_uL11_C_sf"/>
</dbReference>
<dbReference type="InterPro" id="IPR020785">
    <property type="entry name" value="Ribosomal_uL11_CS"/>
</dbReference>
<dbReference type="InterPro" id="IPR020784">
    <property type="entry name" value="Ribosomal_uL11_N"/>
</dbReference>
<dbReference type="InterPro" id="IPR036796">
    <property type="entry name" value="Ribosomal_uL11_N_sf"/>
</dbReference>
<dbReference type="NCBIfam" id="TIGR01632">
    <property type="entry name" value="L11_bact"/>
    <property type="match status" value="1"/>
</dbReference>
<dbReference type="PANTHER" id="PTHR11661">
    <property type="entry name" value="60S RIBOSOMAL PROTEIN L12"/>
    <property type="match status" value="1"/>
</dbReference>
<dbReference type="PANTHER" id="PTHR11661:SF1">
    <property type="entry name" value="LARGE RIBOSOMAL SUBUNIT PROTEIN UL11M"/>
    <property type="match status" value="1"/>
</dbReference>
<dbReference type="Pfam" id="PF00298">
    <property type="entry name" value="Ribosomal_L11"/>
    <property type="match status" value="1"/>
</dbReference>
<dbReference type="Pfam" id="PF03946">
    <property type="entry name" value="Ribosomal_L11_N"/>
    <property type="match status" value="1"/>
</dbReference>
<dbReference type="SMART" id="SM00649">
    <property type="entry name" value="RL11"/>
    <property type="match status" value="1"/>
</dbReference>
<dbReference type="SUPFAM" id="SSF54747">
    <property type="entry name" value="Ribosomal L11/L12e N-terminal domain"/>
    <property type="match status" value="1"/>
</dbReference>
<dbReference type="SUPFAM" id="SSF46906">
    <property type="entry name" value="Ribosomal protein L11, C-terminal domain"/>
    <property type="match status" value="1"/>
</dbReference>
<dbReference type="PROSITE" id="PS00359">
    <property type="entry name" value="RIBOSOMAL_L11"/>
    <property type="match status" value="1"/>
</dbReference>
<name>RL11_PROM1</name>
<accession>A2C034</accession>